<feature type="chain" id="PRO_0000078648" description="Chaperone protein HscA">
    <location>
        <begin position="1"/>
        <end position="616"/>
    </location>
</feature>
<keyword id="KW-0067">ATP-binding</keyword>
<keyword id="KW-0143">Chaperone</keyword>
<keyword id="KW-0547">Nucleotide-binding</keyword>
<keyword id="KW-1185">Reference proteome</keyword>
<protein>
    <recommendedName>
        <fullName evidence="1">Chaperone protein HscA</fullName>
    </recommendedName>
    <alternativeName>
        <fullName evidence="1">Hsc66</fullName>
    </alternativeName>
</protein>
<comment type="function">
    <text evidence="1">Chaperone involved in the maturation of iron-sulfur cluster-containing proteins. Has a low intrinsic ATPase activity which is markedly stimulated by HscB. Involved in the maturation of IscU.</text>
</comment>
<comment type="similarity">
    <text evidence="1">Belongs to the heat shock protein 70 family.</text>
</comment>
<proteinExistence type="inferred from homology"/>
<sequence length="616" mass="65651">MALLQISEPGLSAAPHQRRLAAGIDLGTTNSLVATVRSGQAETLPDHEGRHLLPSVVHYQQQGHTVGYAARDNAAQDTANTISSVKRMMGRSLADIQTRYPHLPYRFKASVNGLPMIDTAAGLLNPVRVSADILKALAARASESLSGELDGVVITVPAYFDDAQRQGTKDAARLAGLHVLRLLNEPTAAAIAYGLDSGKEGVIAVYDLGGGTFDISILRLSRGVFEVLATGGDSALGGDDFDHLLADYIREQAGIADRSDNRVQRELLDAAIAAKIALSDADTVRVNVAGWQGEITREQFNDLISALVKRTLLACRRALKDAGVEPQDVLEVVMVGGSTRVPLVRERVGEFFGRTPLTAIDPDKVVAIGAAIQADILVGNKPDSEMLLLDVIPLSLGLETMGGLVEKVIPRNTTIPVARAQDFTTFKDGQTAMSIHVMQGERELVQDCRSLARFALRGIPPLPAGGAHIRVTFQVDADGLLSVTAMEKSTGVEASIQVKPSYGLTDGEIASMIKDSMSFAEQDVKARMLAEQKVEAARVLESLTGALTADAALLSAAERQCIDDAAAHLSAVAQGDDVDAIEQAIKNVDKQTQEFAARRMDQSVRRALKGHSVDEV</sequence>
<dbReference type="EMBL" id="AE006468">
    <property type="protein sequence ID" value="AAL21433.1"/>
    <property type="molecule type" value="Genomic_DNA"/>
</dbReference>
<dbReference type="RefSeq" id="NP_461474.1">
    <property type="nucleotide sequence ID" value="NC_003197.2"/>
</dbReference>
<dbReference type="RefSeq" id="WP_001196669.1">
    <property type="nucleotide sequence ID" value="NC_003197.2"/>
</dbReference>
<dbReference type="SMR" id="Q8ZN42"/>
<dbReference type="STRING" id="99287.STM2539"/>
<dbReference type="PaxDb" id="99287-STM2539"/>
<dbReference type="GeneID" id="1254061"/>
<dbReference type="KEGG" id="stm:STM2539"/>
<dbReference type="PATRIC" id="fig|99287.12.peg.2679"/>
<dbReference type="HOGENOM" id="CLU_005965_2_1_6"/>
<dbReference type="OMA" id="GGESHMP"/>
<dbReference type="PhylomeDB" id="Q8ZN42"/>
<dbReference type="BioCyc" id="SENT99287:STM2539-MONOMER"/>
<dbReference type="Proteomes" id="UP000001014">
    <property type="component" value="Chromosome"/>
</dbReference>
<dbReference type="GO" id="GO:0005829">
    <property type="term" value="C:cytosol"/>
    <property type="evidence" value="ECO:0000318"/>
    <property type="project" value="GO_Central"/>
</dbReference>
<dbReference type="GO" id="GO:0005524">
    <property type="term" value="F:ATP binding"/>
    <property type="evidence" value="ECO:0007669"/>
    <property type="project" value="UniProtKB-KW"/>
</dbReference>
<dbReference type="GO" id="GO:0016887">
    <property type="term" value="F:ATP hydrolysis activity"/>
    <property type="evidence" value="ECO:0000318"/>
    <property type="project" value="GO_Central"/>
</dbReference>
<dbReference type="GO" id="GO:0140662">
    <property type="term" value="F:ATP-dependent protein folding chaperone"/>
    <property type="evidence" value="ECO:0007669"/>
    <property type="project" value="InterPro"/>
</dbReference>
<dbReference type="GO" id="GO:0031072">
    <property type="term" value="F:heat shock protein binding"/>
    <property type="evidence" value="ECO:0000318"/>
    <property type="project" value="GO_Central"/>
</dbReference>
<dbReference type="GO" id="GO:0044183">
    <property type="term" value="F:protein folding chaperone"/>
    <property type="evidence" value="ECO:0000318"/>
    <property type="project" value="GO_Central"/>
</dbReference>
<dbReference type="GO" id="GO:0051082">
    <property type="term" value="F:unfolded protein binding"/>
    <property type="evidence" value="ECO:0007669"/>
    <property type="project" value="InterPro"/>
</dbReference>
<dbReference type="GO" id="GO:0051085">
    <property type="term" value="P:chaperone cofactor-dependent protein refolding"/>
    <property type="evidence" value="ECO:0000318"/>
    <property type="project" value="GO_Central"/>
</dbReference>
<dbReference type="GO" id="GO:0016226">
    <property type="term" value="P:iron-sulfur cluster assembly"/>
    <property type="evidence" value="ECO:0007669"/>
    <property type="project" value="InterPro"/>
</dbReference>
<dbReference type="GO" id="GO:0042026">
    <property type="term" value="P:protein refolding"/>
    <property type="evidence" value="ECO:0000318"/>
    <property type="project" value="GO_Central"/>
</dbReference>
<dbReference type="CDD" id="cd10236">
    <property type="entry name" value="ASKHA_NBD_HSP70_HscA"/>
    <property type="match status" value="1"/>
</dbReference>
<dbReference type="FunFam" id="1.20.1270.10:FF:000006">
    <property type="entry name" value="Chaperone protein HscA"/>
    <property type="match status" value="1"/>
</dbReference>
<dbReference type="FunFam" id="3.30.420.40:FF:000046">
    <property type="entry name" value="Chaperone protein HscA"/>
    <property type="match status" value="1"/>
</dbReference>
<dbReference type="FunFam" id="3.90.640.10:FF:000013">
    <property type="entry name" value="Chaperone protein HscA"/>
    <property type="match status" value="1"/>
</dbReference>
<dbReference type="FunFam" id="2.60.34.10:FF:000005">
    <property type="entry name" value="Chaperone protein HscA homolog"/>
    <property type="match status" value="1"/>
</dbReference>
<dbReference type="Gene3D" id="1.20.1270.10">
    <property type="match status" value="1"/>
</dbReference>
<dbReference type="Gene3D" id="3.30.420.40">
    <property type="match status" value="2"/>
</dbReference>
<dbReference type="Gene3D" id="3.90.640.10">
    <property type="entry name" value="Actin, Chain A, domain 4"/>
    <property type="match status" value="1"/>
</dbReference>
<dbReference type="Gene3D" id="2.60.34.10">
    <property type="entry name" value="Substrate Binding Domain Of DNAk, Chain A, domain 1"/>
    <property type="match status" value="1"/>
</dbReference>
<dbReference type="HAMAP" id="MF_00679">
    <property type="entry name" value="HscA"/>
    <property type="match status" value="1"/>
</dbReference>
<dbReference type="InterPro" id="IPR043129">
    <property type="entry name" value="ATPase_NBD"/>
</dbReference>
<dbReference type="InterPro" id="IPR018181">
    <property type="entry name" value="Heat_shock_70_CS"/>
</dbReference>
<dbReference type="InterPro" id="IPR042039">
    <property type="entry name" value="HscA_NBD"/>
</dbReference>
<dbReference type="InterPro" id="IPR029048">
    <property type="entry name" value="HSP70_C_sf"/>
</dbReference>
<dbReference type="InterPro" id="IPR029047">
    <property type="entry name" value="HSP70_peptide-bd_sf"/>
</dbReference>
<dbReference type="InterPro" id="IPR013126">
    <property type="entry name" value="Hsp_70_fam"/>
</dbReference>
<dbReference type="InterPro" id="IPR010236">
    <property type="entry name" value="ISC_FeS_clus_asmbl_HscA"/>
</dbReference>
<dbReference type="NCBIfam" id="TIGR01991">
    <property type="entry name" value="HscA"/>
    <property type="match status" value="1"/>
</dbReference>
<dbReference type="NCBIfam" id="NF003520">
    <property type="entry name" value="PRK05183.1"/>
    <property type="match status" value="1"/>
</dbReference>
<dbReference type="PANTHER" id="PTHR19375">
    <property type="entry name" value="HEAT SHOCK PROTEIN 70KDA"/>
    <property type="match status" value="1"/>
</dbReference>
<dbReference type="Pfam" id="PF00012">
    <property type="entry name" value="HSP70"/>
    <property type="match status" value="1"/>
</dbReference>
<dbReference type="PRINTS" id="PR00301">
    <property type="entry name" value="HEATSHOCK70"/>
</dbReference>
<dbReference type="SUPFAM" id="SSF53067">
    <property type="entry name" value="Actin-like ATPase domain"/>
    <property type="match status" value="2"/>
</dbReference>
<dbReference type="SUPFAM" id="SSF100934">
    <property type="entry name" value="Heat shock protein 70kD (HSP70), C-terminal subdomain"/>
    <property type="match status" value="1"/>
</dbReference>
<dbReference type="SUPFAM" id="SSF100920">
    <property type="entry name" value="Heat shock protein 70kD (HSP70), peptide-binding domain"/>
    <property type="match status" value="1"/>
</dbReference>
<dbReference type="PROSITE" id="PS00297">
    <property type="entry name" value="HSP70_1"/>
    <property type="match status" value="1"/>
</dbReference>
<dbReference type="PROSITE" id="PS00329">
    <property type="entry name" value="HSP70_2"/>
    <property type="match status" value="1"/>
</dbReference>
<dbReference type="PROSITE" id="PS01036">
    <property type="entry name" value="HSP70_3"/>
    <property type="match status" value="1"/>
</dbReference>
<reference key="1">
    <citation type="journal article" date="2001" name="Nature">
        <title>Complete genome sequence of Salmonella enterica serovar Typhimurium LT2.</title>
        <authorList>
            <person name="McClelland M."/>
            <person name="Sanderson K.E."/>
            <person name="Spieth J."/>
            <person name="Clifton S.W."/>
            <person name="Latreille P."/>
            <person name="Courtney L."/>
            <person name="Porwollik S."/>
            <person name="Ali J."/>
            <person name="Dante M."/>
            <person name="Du F."/>
            <person name="Hou S."/>
            <person name="Layman D."/>
            <person name="Leonard S."/>
            <person name="Nguyen C."/>
            <person name="Scott K."/>
            <person name="Holmes A."/>
            <person name="Grewal N."/>
            <person name="Mulvaney E."/>
            <person name="Ryan E."/>
            <person name="Sun H."/>
            <person name="Florea L."/>
            <person name="Miller W."/>
            <person name="Stoneking T."/>
            <person name="Nhan M."/>
            <person name="Waterston R."/>
            <person name="Wilson R.K."/>
        </authorList>
    </citation>
    <scope>NUCLEOTIDE SEQUENCE [LARGE SCALE GENOMIC DNA]</scope>
    <source>
        <strain>LT2 / SGSC1412 / ATCC 700720</strain>
    </source>
</reference>
<gene>
    <name evidence="1" type="primary">hscA</name>
    <name type="ordered locus">STM2539</name>
</gene>
<organism>
    <name type="scientific">Salmonella typhimurium (strain LT2 / SGSC1412 / ATCC 700720)</name>
    <dbReference type="NCBI Taxonomy" id="99287"/>
    <lineage>
        <taxon>Bacteria</taxon>
        <taxon>Pseudomonadati</taxon>
        <taxon>Pseudomonadota</taxon>
        <taxon>Gammaproteobacteria</taxon>
        <taxon>Enterobacterales</taxon>
        <taxon>Enterobacteriaceae</taxon>
        <taxon>Salmonella</taxon>
    </lineage>
</organism>
<name>HSCA_SALTY</name>
<evidence type="ECO:0000255" key="1">
    <source>
        <dbReference type="HAMAP-Rule" id="MF_00679"/>
    </source>
</evidence>
<accession>Q8ZN42</accession>